<reference key="1">
    <citation type="submission" date="1999-10" db="EMBL/GenBank/DDBJ databases">
        <title>Antigens recognized by antibody against isolated chromatin fraction from rat liver cells.</title>
        <authorList>
            <person name="Hara M."/>
            <person name="Watabe S."/>
            <person name="Igarashi J."/>
            <person name="Yamashita K."/>
            <person name="Yokosuka M."/>
            <person name="Iigo M."/>
            <person name="Ohtani-Kaneko R."/>
            <person name="Hirata K."/>
        </authorList>
    </citation>
    <scope>NUCLEOTIDE SEQUENCE [MRNA] (ISOFORMS 1 AND 2)</scope>
</reference>
<reference key="2">
    <citation type="journal article" date="2004" name="Genome Res.">
        <title>The status, quality, and expansion of the NIH full-length cDNA project: the Mammalian Gene Collection (MGC).</title>
        <authorList>
            <consortium name="The MGC Project Team"/>
        </authorList>
    </citation>
    <scope>NUCLEOTIDE SEQUENCE [LARGE SCALE MRNA] (ISOFORM 2)</scope>
    <source>
        <tissue>Brain</tissue>
    </source>
</reference>
<reference key="3">
    <citation type="journal article" date="2011" name="Proc. Natl. Acad. Sci. U.S.A.">
        <title>Mutation of the conserved polyadenosine RNA binding protein, ZC3H14/dNab2, impairs neural function in Drosophila and humans.</title>
        <authorList>
            <person name="Pak C."/>
            <person name="Garshasbi M."/>
            <person name="Kahrizi K."/>
            <person name="Gross C."/>
            <person name="Apponi L.H."/>
            <person name="Noto J.J."/>
            <person name="Kelly S.M."/>
            <person name="Leung S.W."/>
            <person name="Tzschach A."/>
            <person name="Behjati F."/>
            <person name="Abedini S.S."/>
            <person name="Mohseni M."/>
            <person name="Jensen L.R."/>
            <person name="Hu H."/>
            <person name="Huang B."/>
            <person name="Stahley S.N."/>
            <person name="Liu G."/>
            <person name="Williams K.R."/>
            <person name="Burdick S."/>
            <person name="Feng Y."/>
            <person name="Sanyal S."/>
            <person name="Bassell G.J."/>
            <person name="Ropers H.H."/>
            <person name="Najmabadi H."/>
            <person name="Corbett A.H."/>
            <person name="Moberg K.H."/>
            <person name="Kuss A.W."/>
        </authorList>
    </citation>
    <scope>SUBCELLULAR LOCATION</scope>
</reference>
<reference key="4">
    <citation type="journal article" date="2012" name="Nat. Commun.">
        <title>Quantitative maps of protein phosphorylation sites across 14 different rat organs and tissues.</title>
        <authorList>
            <person name="Lundby A."/>
            <person name="Secher A."/>
            <person name="Lage K."/>
            <person name="Nordsborg N.B."/>
            <person name="Dmytriyev A."/>
            <person name="Lundby C."/>
            <person name="Olsen J.V."/>
        </authorList>
    </citation>
    <scope>PHOSPHORYLATION [LARGE SCALE ANALYSIS] AT SER-85 AND SER-515</scope>
    <scope>IDENTIFICATION BY MASS SPECTROMETRY [LARGE SCALE ANALYSIS]</scope>
</reference>
<comment type="function">
    <text evidence="1">RNA-binding protein involved in the biogenesis of circular RNAs (circRNAs), which are produced by back-splicing circularization of pre-mRNAs. Acts by binding to both exon-intron boundary and 3'-UTR of pre-mRNAs to promote circRNA biogenesis through dimerization and the association with the spliceosome. Required for spermatogenesis via involvement in circRNA biogenesis. Regulates the pre-mRNA processing of ATP5MC1; preventing its degradation. Also binds the poly(A) tail of mRNAs; controlling poly(A) length in neuronal cells.</text>
</comment>
<comment type="subunit">
    <text evidence="1">Homodimer; facilitating circular RNAs (circRNAs) formation. Associates with the spliceosome. Interacts with HOOK2. Interacts with ZFC3H1 in a RNase-sensitive manner.</text>
</comment>
<comment type="subcellular location">
    <subcellularLocation>
        <location evidence="5">Nucleus speckle</location>
    </subcellularLocation>
    <text evidence="5">Colocalizes with poly(A) RNA in nuclear speckles.</text>
</comment>
<comment type="alternative products">
    <event type="alternative splicing"/>
    <isoform>
        <id>Q7TMD5-1</id>
        <name>1</name>
        <name evidence="8">UKp83</name>
        <sequence type="displayed"/>
    </isoform>
    <isoform>
        <id>Q7TMD5-2</id>
        <name>2</name>
        <name evidence="8">UKp68</name>
        <sequence type="described" ref="VSP_033181"/>
    </isoform>
</comment>
<comment type="similarity">
    <text evidence="9">Belongs to the ZC3H14 family.</text>
</comment>
<dbReference type="EMBL" id="AB032932">
    <property type="protein sequence ID" value="BAB40453.1"/>
    <property type="molecule type" value="mRNA"/>
</dbReference>
<dbReference type="EMBL" id="AB097075">
    <property type="protein sequence ID" value="BAC76890.1"/>
    <property type="molecule type" value="mRNA"/>
</dbReference>
<dbReference type="EMBL" id="AB097076">
    <property type="protein sequence ID" value="BAC76891.1"/>
    <property type="molecule type" value="mRNA"/>
</dbReference>
<dbReference type="EMBL" id="AB097077">
    <property type="protein sequence ID" value="BAC76892.1"/>
    <property type="molecule type" value="mRNA"/>
</dbReference>
<dbReference type="EMBL" id="BC087712">
    <property type="protein sequence ID" value="AAH87712.1"/>
    <property type="molecule type" value="mRNA"/>
</dbReference>
<dbReference type="RefSeq" id="NP_001029123.1">
    <property type="nucleotide sequence ID" value="NM_001033951.1"/>
</dbReference>
<dbReference type="RefSeq" id="NP_620275.1">
    <property type="nucleotide sequence ID" value="NM_138920.1"/>
</dbReference>
<dbReference type="BioGRID" id="251412">
    <property type="interactions" value="1"/>
</dbReference>
<dbReference type="FunCoup" id="Q7TMD5">
    <property type="interactions" value="3393"/>
</dbReference>
<dbReference type="STRING" id="10116.ENSRNOP00000047580"/>
<dbReference type="iPTMnet" id="Q7TMD5"/>
<dbReference type="PhosphoSitePlus" id="Q7TMD5"/>
<dbReference type="jPOST" id="Q7TMD5"/>
<dbReference type="PaxDb" id="10116-ENSRNOP00000047580"/>
<dbReference type="GeneID" id="192359"/>
<dbReference type="KEGG" id="rno:192359"/>
<dbReference type="UCSC" id="RGD:621850">
    <molecule id="Q7TMD5-1"/>
    <property type="organism name" value="rat"/>
</dbReference>
<dbReference type="AGR" id="RGD:621850"/>
<dbReference type="CTD" id="79882"/>
<dbReference type="RGD" id="621850">
    <property type="gene designation" value="Zc3h14"/>
</dbReference>
<dbReference type="eggNOG" id="KOG3702">
    <property type="taxonomic scope" value="Eukaryota"/>
</dbReference>
<dbReference type="InParanoid" id="Q7TMD5"/>
<dbReference type="OrthoDB" id="28764at9989"/>
<dbReference type="PhylomeDB" id="Q7TMD5"/>
<dbReference type="PRO" id="PR:Q7TMD5"/>
<dbReference type="Proteomes" id="UP000002494">
    <property type="component" value="Unplaced"/>
</dbReference>
<dbReference type="GO" id="GO:1904115">
    <property type="term" value="C:axon cytoplasm"/>
    <property type="evidence" value="ECO:0000266"/>
    <property type="project" value="RGD"/>
</dbReference>
<dbReference type="GO" id="GO:0005737">
    <property type="term" value="C:cytoplasm"/>
    <property type="evidence" value="ECO:0000318"/>
    <property type="project" value="GO_Central"/>
</dbReference>
<dbReference type="GO" id="GO:0032839">
    <property type="term" value="C:dendrite cytoplasm"/>
    <property type="evidence" value="ECO:0000266"/>
    <property type="project" value="RGD"/>
</dbReference>
<dbReference type="GO" id="GO:0016607">
    <property type="term" value="C:nuclear speck"/>
    <property type="evidence" value="ECO:0000314"/>
    <property type="project" value="UniProtKB"/>
</dbReference>
<dbReference type="GO" id="GO:0005634">
    <property type="term" value="C:nucleus"/>
    <property type="evidence" value="ECO:0000250"/>
    <property type="project" value="UniProtKB"/>
</dbReference>
<dbReference type="GO" id="GO:1990904">
    <property type="term" value="C:ribonucleoprotein complex"/>
    <property type="evidence" value="ECO:0000266"/>
    <property type="project" value="RGD"/>
</dbReference>
<dbReference type="GO" id="GO:0003730">
    <property type="term" value="F:mRNA 3'-UTR binding"/>
    <property type="evidence" value="ECO:0000266"/>
    <property type="project" value="RGD"/>
</dbReference>
<dbReference type="GO" id="GO:0008143">
    <property type="term" value="F:poly(A) binding"/>
    <property type="evidence" value="ECO:0000250"/>
    <property type="project" value="UniProtKB"/>
</dbReference>
<dbReference type="GO" id="GO:0036002">
    <property type="term" value="F:pre-mRNA binding"/>
    <property type="evidence" value="ECO:0000250"/>
    <property type="project" value="UniProtKB"/>
</dbReference>
<dbReference type="GO" id="GO:0008270">
    <property type="term" value="F:zinc ion binding"/>
    <property type="evidence" value="ECO:0007669"/>
    <property type="project" value="UniProtKB-KW"/>
</dbReference>
<dbReference type="GO" id="GO:0048255">
    <property type="term" value="P:mRNA stabilization"/>
    <property type="evidence" value="ECO:0000250"/>
    <property type="project" value="UniProtKB"/>
</dbReference>
<dbReference type="GO" id="GO:0043488">
    <property type="term" value="P:regulation of mRNA stability"/>
    <property type="evidence" value="ECO:0000318"/>
    <property type="project" value="GO_Central"/>
</dbReference>
<dbReference type="GO" id="GO:0007283">
    <property type="term" value="P:spermatogenesis"/>
    <property type="evidence" value="ECO:0000250"/>
    <property type="project" value="UniProtKB"/>
</dbReference>
<dbReference type="GO" id="GO:0160091">
    <property type="term" value="P:spliceosome-depend formation of circular RNA"/>
    <property type="evidence" value="ECO:0000266"/>
    <property type="project" value="RGD"/>
</dbReference>
<dbReference type="FunFam" id="4.10.1000.30:FF:000001">
    <property type="entry name" value="Zinc finger CCCH domain-containing protein 14"/>
    <property type="match status" value="1"/>
</dbReference>
<dbReference type="FunFam" id="4.10.1000.40:FF:000006">
    <property type="entry name" value="Zinc finger CCCH domain-containing protein 14"/>
    <property type="match status" value="1"/>
</dbReference>
<dbReference type="FunFam" id="1.20.1390.10:FF:000006">
    <property type="entry name" value="zinc finger CCCH domain-containing protein 14"/>
    <property type="match status" value="1"/>
</dbReference>
<dbReference type="FunFam" id="4.10.1000.40:FF:000001">
    <property type="entry name" value="zinc finger CCCH domain-containing protein 14 isoform X2"/>
    <property type="match status" value="1"/>
</dbReference>
<dbReference type="FunFam" id="4.10.1000.30:FF:000003">
    <property type="entry name" value="zinc finger CCCH domain-containing protein 14 isoform X6"/>
    <property type="match status" value="1"/>
</dbReference>
<dbReference type="Gene3D" id="4.10.1000.30">
    <property type="match status" value="1"/>
</dbReference>
<dbReference type="Gene3D" id="4.10.1000.40">
    <property type="match status" value="1"/>
</dbReference>
<dbReference type="Gene3D" id="1.20.1390.10">
    <property type="entry name" value="PWI domain"/>
    <property type="match status" value="1"/>
</dbReference>
<dbReference type="InterPro" id="IPR040366">
    <property type="entry name" value="Nab2/ZC3H14"/>
</dbReference>
<dbReference type="InterPro" id="IPR000571">
    <property type="entry name" value="Znf_CCCH"/>
</dbReference>
<dbReference type="PANTHER" id="PTHR14738">
    <property type="entry name" value="ZINC FINGER CCCH DOMAIN-CONTAINING PROTEIN 14"/>
    <property type="match status" value="1"/>
</dbReference>
<dbReference type="PANTHER" id="PTHR14738:SF29">
    <property type="entry name" value="ZINC FINGER CCCH DOMAIN-CONTAINING PROTEIN 14"/>
    <property type="match status" value="1"/>
</dbReference>
<dbReference type="Pfam" id="PF14608">
    <property type="entry name" value="zf-CCCH_2"/>
    <property type="match status" value="5"/>
</dbReference>
<dbReference type="PROSITE" id="PS50103">
    <property type="entry name" value="ZF_C3H1"/>
    <property type="match status" value="3"/>
</dbReference>
<accession>Q7TMD5</accession>
<accession>Q7TSK6</accession>
<accession>Q99NC1</accession>
<keyword id="KW-0007">Acetylation</keyword>
<keyword id="KW-0025">Alternative splicing</keyword>
<keyword id="KW-0221">Differentiation</keyword>
<keyword id="KW-1017">Isopeptide bond</keyword>
<keyword id="KW-0479">Metal-binding</keyword>
<keyword id="KW-0539">Nucleus</keyword>
<keyword id="KW-0597">Phosphoprotein</keyword>
<keyword id="KW-1185">Reference proteome</keyword>
<keyword id="KW-0677">Repeat</keyword>
<keyword id="KW-0694">RNA-binding</keyword>
<keyword id="KW-0744">Spermatogenesis</keyword>
<keyword id="KW-0832">Ubl conjugation</keyword>
<keyword id="KW-0862">Zinc</keyword>
<keyword id="KW-0863">Zinc-finger</keyword>
<protein>
    <recommendedName>
        <fullName>Zinc finger CCCH domain-containing protein 14</fullName>
    </recommendedName>
    <alternativeName>
        <fullName evidence="8">Nuclear protein UKp83/UKp68</fullName>
    </alternativeName>
</protein>
<organism>
    <name type="scientific">Rattus norvegicus</name>
    <name type="common">Rat</name>
    <dbReference type="NCBI Taxonomy" id="10116"/>
    <lineage>
        <taxon>Eukaryota</taxon>
        <taxon>Metazoa</taxon>
        <taxon>Chordata</taxon>
        <taxon>Craniata</taxon>
        <taxon>Vertebrata</taxon>
        <taxon>Euteleostomi</taxon>
        <taxon>Mammalia</taxon>
        <taxon>Eutheria</taxon>
        <taxon>Euarchontoglires</taxon>
        <taxon>Glires</taxon>
        <taxon>Rodentia</taxon>
        <taxon>Myomorpha</taxon>
        <taxon>Muroidea</taxon>
        <taxon>Muridae</taxon>
        <taxon>Murinae</taxon>
        <taxon>Rattus</taxon>
    </lineage>
</organism>
<proteinExistence type="evidence at protein level"/>
<sequence>MEIGTEISRKIRSAIKGKLQELGAYVDEELPDYIMVMVANKKSQDQMTEDLSLFLGNNTIRFTVWLHGVLDKLRSVTTEPSSLKSPDTSIFDSNVPSNKSSFSRGDERRHEAAIPPLAVSSSRPEKRDSRVSTSSQEHKSTNVRHSYDDGASTRLMSTVKPLREPAPSEDVIDIKPEPDDLIDEDLNFVQENSLSQKKPTVTLTYGSSRPSIEIYRPPASRNADTGTHLNRPQLQQQQSSTHTAKQLDGQSSQVYEAGRLCEPEVLGSVEDTYSPFFRNNLDKMNIEEENFRKRKLPVVSSVVKVKRFSHDGEEEEEDEDYGTRVGSLSSSVSVPAKPERRPSLPPSKQANKNLILKAISEAQESVTKTTNYPAVPQKQTLPVAPRTRTSQEEVLAEMVQGQNRAPRISPPVKEEEAKGDNAEKIEGTQQRQLLSRLQIDPVTVDTMELSQDYYDMESMVHADTRSFILKKPKLSEEIVVTPNQDSGMKTADALRVLSGHLMQTRDLVQPDKPASPKFIVTLDGVPSPPGYMSDQEEEMCFEGMKPVNQTSASNKGLRGLLHPQQLHLLSRQLEDPDGSFSNAEMTDLSVAQKPEKLLERCKYWPACKNGDECVYHHPISPCKAFPNCKFAEKCLFVHPNCKYDAKCTKADCPFTHMSRRGPVLTPKPAVSSPAPSSNGQFCRYFPACKKMECPFYHPKHCRFNTQCTRPDCTFYHPTITVPPRHALKWIRPQTSE</sequence>
<feature type="chain" id="PRO_0000331314" description="Zinc finger CCCH domain-containing protein 14">
    <location>
        <begin position="1"/>
        <end position="736"/>
    </location>
</feature>
<feature type="zinc finger region" description="C3H1-type 1" evidence="3">
    <location>
        <begin position="595"/>
        <end position="620"/>
    </location>
</feature>
<feature type="zinc finger region" description="C3H1-type 2" evidence="3">
    <location>
        <begin position="621"/>
        <end position="640"/>
    </location>
</feature>
<feature type="zinc finger region" description="C3H1-type 3" evidence="3">
    <location>
        <begin position="641"/>
        <end position="656"/>
    </location>
</feature>
<feature type="zinc finger region" description="C3H1-type 4" evidence="3">
    <location>
        <begin position="682"/>
        <end position="699"/>
    </location>
</feature>
<feature type="zinc finger region" description="C3H1-type 5" evidence="3">
    <location>
        <begin position="701"/>
        <end position="719"/>
    </location>
</feature>
<feature type="region of interest" description="Disordered" evidence="4">
    <location>
        <begin position="77"/>
        <end position="153"/>
    </location>
</feature>
<feature type="region of interest" description="Disordered" evidence="4">
    <location>
        <begin position="308"/>
        <end position="350"/>
    </location>
</feature>
<feature type="region of interest" description="Disordered" evidence="4">
    <location>
        <begin position="367"/>
        <end position="386"/>
    </location>
</feature>
<feature type="region of interest" description="Disordered" evidence="4">
    <location>
        <begin position="400"/>
        <end position="420"/>
    </location>
</feature>
<feature type="compositionally biased region" description="Polar residues" evidence="4">
    <location>
        <begin position="77"/>
        <end position="103"/>
    </location>
</feature>
<feature type="compositionally biased region" description="Basic and acidic residues" evidence="4">
    <location>
        <begin position="123"/>
        <end position="148"/>
    </location>
</feature>
<feature type="compositionally biased region" description="Polar residues" evidence="4">
    <location>
        <begin position="367"/>
        <end position="380"/>
    </location>
</feature>
<feature type="modified residue" description="N-acetylmethionine" evidence="1">
    <location>
        <position position="1"/>
    </location>
</feature>
<feature type="modified residue" description="Phosphoserine" evidence="10">
    <location>
        <position position="85"/>
    </location>
</feature>
<feature type="modified residue" description="Phosphoserine" evidence="1">
    <location>
        <position position="240"/>
    </location>
</feature>
<feature type="modified residue" description="Phosphoserine" evidence="2">
    <location>
        <position position="309"/>
    </location>
</feature>
<feature type="modified residue" description="Phosphoserine" evidence="1">
    <location>
        <position position="327"/>
    </location>
</feature>
<feature type="modified residue" description="Phosphoserine" evidence="1">
    <location>
        <position position="343"/>
    </location>
</feature>
<feature type="modified residue" description="N6-acetyllysine; alternate" evidence="1">
    <location>
        <position position="357"/>
    </location>
</feature>
<feature type="modified residue" description="Phosphoserine" evidence="1">
    <location>
        <position position="390"/>
    </location>
</feature>
<feature type="modified residue" description="Phosphoserine" evidence="1">
    <location>
        <position position="409"/>
    </location>
</feature>
<feature type="modified residue" description="Phosphoserine" evidence="1">
    <location>
        <position position="498"/>
    </location>
</feature>
<feature type="modified residue" description="Phosphoserine" evidence="10">
    <location>
        <position position="515"/>
    </location>
</feature>
<feature type="modified residue" description="Phosphoserine" evidence="2">
    <location>
        <position position="527"/>
    </location>
</feature>
<feature type="modified residue" description="Phosphoserine" evidence="1">
    <location>
        <position position="620"/>
    </location>
</feature>
<feature type="cross-link" description="Glycyl lysine isopeptide (Lys-Gly) (interchain with G-Cter in SUMO2)" evidence="1">
    <location>
        <position position="99"/>
    </location>
</feature>
<feature type="cross-link" description="Glycyl lysine isopeptide (Lys-Gly) (interchain with G-Cter in SUMO2)" evidence="1">
    <location>
        <position position="139"/>
    </location>
</feature>
<feature type="cross-link" description="Glycyl lysine isopeptide (Lys-Gly) (interchain with G-Cter in SUMO2)" evidence="1">
    <location>
        <position position="175"/>
    </location>
</feature>
<feature type="cross-link" description="Glycyl lysine isopeptide (Lys-Gly) (interchain with G-Cter in SUMO2)" evidence="1">
    <location>
        <position position="198"/>
    </location>
</feature>
<feature type="cross-link" description="Glycyl lysine isopeptide (Lys-Gly) (interchain with G-Cter in SUMO2)" evidence="1">
    <location>
        <position position="245"/>
    </location>
</feature>
<feature type="cross-link" description="Glycyl lysine isopeptide (Lys-Gly) (interchain with G-Cter in SUMO2)" evidence="1">
    <location>
        <position position="283"/>
    </location>
</feature>
<feature type="cross-link" description="Glycyl lysine isopeptide (Lys-Gly) (interchain with G-Cter in SUMO2)" evidence="1">
    <location>
        <position position="295"/>
    </location>
</feature>
<feature type="cross-link" description="Glycyl lysine isopeptide (Lys-Gly) (interchain with G-Cter in SUMO2); alternate" evidence="1">
    <location>
        <position position="357"/>
    </location>
</feature>
<feature type="cross-link" description="Glycyl lysine isopeptide (Lys-Gly) (interchain with G-Cter in SUMO2)" evidence="1">
    <location>
        <position position="378"/>
    </location>
</feature>
<feature type="cross-link" description="Glycyl lysine isopeptide (Lys-Gly) (interchain with G-Cter in SUMO2)" evidence="1">
    <location>
        <position position="413"/>
    </location>
</feature>
<feature type="cross-link" description="Glycyl lysine isopeptide (Lys-Gly) (interchain with G-Cter in SUMO2)" evidence="1">
    <location>
        <position position="489"/>
    </location>
</feature>
<feature type="splice variant" id="VSP_033181" description="In isoform 2." evidence="6 8">
    <location>
        <begin position="452"/>
        <end position="582"/>
    </location>
</feature>
<feature type="sequence conflict" description="In Ref. 1; BAC76891 and 2; AAH87712." evidence="9" ref="1 2">
    <original>F</original>
    <variation>L</variation>
    <location>
        <position position="681"/>
    </location>
</feature>
<gene>
    <name evidence="7" type="primary">Zc3h14</name>
    <name evidence="8" type="synonym">Npuk68</name>
</gene>
<name>ZC3HE_RAT</name>
<evidence type="ECO:0000250" key="1">
    <source>
        <dbReference type="UniProtKB" id="Q6PJT7"/>
    </source>
</evidence>
<evidence type="ECO:0000250" key="2">
    <source>
        <dbReference type="UniProtKB" id="Q8BJ05"/>
    </source>
</evidence>
<evidence type="ECO:0000255" key="3">
    <source>
        <dbReference type="PROSITE-ProRule" id="PRU00723"/>
    </source>
</evidence>
<evidence type="ECO:0000256" key="4">
    <source>
        <dbReference type="SAM" id="MobiDB-lite"/>
    </source>
</evidence>
<evidence type="ECO:0000269" key="5">
    <source>
    </source>
</evidence>
<evidence type="ECO:0000303" key="6">
    <source>
    </source>
</evidence>
<evidence type="ECO:0000303" key="7">
    <source>
    </source>
</evidence>
<evidence type="ECO:0000303" key="8">
    <source ref="1"/>
</evidence>
<evidence type="ECO:0000305" key="9"/>
<evidence type="ECO:0007744" key="10">
    <source>
    </source>
</evidence>